<comment type="function">
    <text evidence="2">Involved in the export of the metallophore staphylopine.</text>
</comment>
<comment type="subcellular location">
    <subcellularLocation>
        <location evidence="4">Cell membrane</location>
        <topology evidence="1">Multi-pass membrane protein</topology>
    </subcellularLocation>
</comment>
<comment type="induction">
    <text evidence="2">Up-regulated in metal-poor media.</text>
</comment>
<comment type="similarity">
    <text evidence="4">Belongs to the major facilitator superfamily.</text>
</comment>
<keyword id="KW-1003">Cell membrane</keyword>
<keyword id="KW-0472">Membrane</keyword>
<keyword id="KW-0812">Transmembrane</keyword>
<keyword id="KW-1133">Transmembrane helix</keyword>
<keyword id="KW-0813">Transport</keyword>
<name>CNTE_STAAM</name>
<evidence type="ECO:0000255" key="1"/>
<evidence type="ECO:0000269" key="2">
    <source>
    </source>
</evidence>
<evidence type="ECO:0000303" key="3">
    <source>
    </source>
</evidence>
<evidence type="ECO:0000305" key="4"/>
<evidence type="ECO:0000312" key="5">
    <source>
        <dbReference type="EMBL" id="BAB58624.1"/>
    </source>
</evidence>
<protein>
    <recommendedName>
        <fullName evidence="4">Staphylopine export protein</fullName>
    </recommendedName>
</protein>
<organism>
    <name type="scientific">Staphylococcus aureus (strain Mu50 / ATCC 700699)</name>
    <dbReference type="NCBI Taxonomy" id="158878"/>
    <lineage>
        <taxon>Bacteria</taxon>
        <taxon>Bacillati</taxon>
        <taxon>Bacillota</taxon>
        <taxon>Bacilli</taxon>
        <taxon>Bacillales</taxon>
        <taxon>Staphylococcaceae</taxon>
        <taxon>Staphylococcus</taxon>
    </lineage>
</organism>
<sequence length="397" mass="43295">MKGAMAWPFLRLYILTLMFFSANAILNVFIPLRGHDLGATNTVIGIVMGAYMLTAMVFRPWAGQIIARVGPIKVLRIILIINAIALIIYGFTGLEGYFVARVMQGVCTAFFSMSLQLGIIDALPEEHRSEGVSLYSLFSTIPNLIGPLVAVGIWNANNISLFAIVIIFIALTTTFFGYRVTFAEQEPDTSDKIEKMPFNAVTVFAQFFKNKELLNSGIIMIVASIVFGAVSTFVPLYTVSLGFANAGIFLTIQAIAVVAARFYLRKYIPSDGMWHPKYMVSVLSLLVIASFVVAFGPQVGAIIFYGSAILIGMTQAMVYPTLTSYLSFVLPKVGRNMLLGLFIACADLGISLGGALMGPISDLVGFKWMYLICGMLVIVIMIMSFLKKPTPRPASSL</sequence>
<proteinExistence type="evidence at transcript level"/>
<reference key="1">
    <citation type="journal article" date="2001" name="Lancet">
        <title>Whole genome sequencing of meticillin-resistant Staphylococcus aureus.</title>
        <authorList>
            <person name="Kuroda M."/>
            <person name="Ohta T."/>
            <person name="Uchiyama I."/>
            <person name="Baba T."/>
            <person name="Yuzawa H."/>
            <person name="Kobayashi I."/>
            <person name="Cui L."/>
            <person name="Oguchi A."/>
            <person name="Aoki K."/>
            <person name="Nagai Y."/>
            <person name="Lian J.-Q."/>
            <person name="Ito T."/>
            <person name="Kanamori M."/>
            <person name="Matsumaru H."/>
            <person name="Maruyama A."/>
            <person name="Murakami H."/>
            <person name="Hosoyama A."/>
            <person name="Mizutani-Ui Y."/>
            <person name="Takahashi N.K."/>
            <person name="Sawano T."/>
            <person name="Inoue R."/>
            <person name="Kaito C."/>
            <person name="Sekimizu K."/>
            <person name="Hirakawa H."/>
            <person name="Kuhara S."/>
            <person name="Goto S."/>
            <person name="Yabuzaki J."/>
            <person name="Kanehisa M."/>
            <person name="Yamashita A."/>
            <person name="Oshima K."/>
            <person name="Furuya K."/>
            <person name="Yoshino C."/>
            <person name="Shiba T."/>
            <person name="Hattori M."/>
            <person name="Ogasawara N."/>
            <person name="Hayashi H."/>
            <person name="Hiramatsu K."/>
        </authorList>
    </citation>
    <scope>NUCLEOTIDE SEQUENCE [LARGE SCALE GENOMIC DNA]</scope>
    <source>
        <strain>Mu50 / ATCC 700699</strain>
    </source>
</reference>
<reference key="2">
    <citation type="journal article" date="2016" name="Science">
        <title>Biosynthesis of a broad-spectrum nicotianamine-like metallophore in Staphylococcus aureus.</title>
        <authorList>
            <person name="Ghssein G."/>
            <person name="Brutesco C."/>
            <person name="Ouerdane L."/>
            <person name="Fojcik C."/>
            <person name="Izaute A."/>
            <person name="Wang S."/>
            <person name="Hajjar C."/>
            <person name="Lobinski R."/>
            <person name="Lemaire D."/>
            <person name="Richaud P."/>
            <person name="Voulhoux R."/>
            <person name="Espaillat A."/>
            <person name="Cava F."/>
            <person name="Pignol D."/>
            <person name="Borezee-Durant E."/>
            <person name="Arnoux P."/>
        </authorList>
    </citation>
    <scope>FUNCTION</scope>
    <scope>INDUCTION</scope>
    <source>
        <strain>Mu50 / ATCC 700699</strain>
    </source>
</reference>
<feature type="chain" id="PRO_0000447262" description="Staphylopine export protein">
    <location>
        <begin position="1"/>
        <end position="397"/>
    </location>
</feature>
<feature type="transmembrane region" description="Helical" evidence="1">
    <location>
        <begin position="12"/>
        <end position="32"/>
    </location>
</feature>
<feature type="transmembrane region" description="Helical" evidence="1">
    <location>
        <begin position="38"/>
        <end position="58"/>
    </location>
</feature>
<feature type="transmembrane region" description="Helical" evidence="1">
    <location>
        <begin position="77"/>
        <end position="97"/>
    </location>
</feature>
<feature type="transmembrane region" description="Helical" evidence="1">
    <location>
        <begin position="102"/>
        <end position="122"/>
    </location>
</feature>
<feature type="transmembrane region" description="Helical" evidence="1">
    <location>
        <begin position="134"/>
        <end position="154"/>
    </location>
</feature>
<feature type="transmembrane region" description="Helical" evidence="1">
    <location>
        <begin position="158"/>
        <end position="178"/>
    </location>
</feature>
<feature type="transmembrane region" description="Helical" evidence="1">
    <location>
        <begin position="217"/>
        <end position="237"/>
    </location>
</feature>
<feature type="transmembrane region" description="Helical" evidence="1">
    <location>
        <begin position="239"/>
        <end position="259"/>
    </location>
</feature>
<feature type="transmembrane region" description="Helical" evidence="1">
    <location>
        <begin position="285"/>
        <end position="305"/>
    </location>
</feature>
<feature type="transmembrane region" description="Helical" evidence="1">
    <location>
        <begin position="309"/>
        <end position="329"/>
    </location>
</feature>
<feature type="transmembrane region" description="Helical" evidence="1">
    <location>
        <begin position="337"/>
        <end position="357"/>
    </location>
</feature>
<feature type="transmembrane region" description="Helical" evidence="1">
    <location>
        <begin position="363"/>
        <end position="383"/>
    </location>
</feature>
<gene>
    <name evidence="3" type="primary">cntE</name>
    <name evidence="5" type="ordered locus">SAV2462</name>
</gene>
<accession>A0A0H3JTK0</accession>
<dbReference type="EMBL" id="BA000017">
    <property type="protein sequence ID" value="BAB58624.1"/>
    <property type="molecule type" value="Genomic_DNA"/>
</dbReference>
<dbReference type="RefSeq" id="WP_000675401.1">
    <property type="nucleotide sequence ID" value="NC_002758.2"/>
</dbReference>
<dbReference type="SMR" id="A0A0H3JTK0"/>
<dbReference type="KEGG" id="sav:SAV2462"/>
<dbReference type="HOGENOM" id="CLU_696200_0_0_9"/>
<dbReference type="PhylomeDB" id="A0A0H3JTK0"/>
<dbReference type="Proteomes" id="UP000002481">
    <property type="component" value="Chromosome"/>
</dbReference>
<dbReference type="GO" id="GO:0005886">
    <property type="term" value="C:plasma membrane"/>
    <property type="evidence" value="ECO:0007669"/>
    <property type="project" value="UniProtKB-SubCell"/>
</dbReference>
<dbReference type="GO" id="GO:0022857">
    <property type="term" value="F:transmembrane transporter activity"/>
    <property type="evidence" value="ECO:0007669"/>
    <property type="project" value="InterPro"/>
</dbReference>
<dbReference type="CDD" id="cd17489">
    <property type="entry name" value="MFS_YfcJ_like"/>
    <property type="match status" value="1"/>
</dbReference>
<dbReference type="Gene3D" id="1.20.1250.20">
    <property type="entry name" value="MFS general substrate transporter like domains"/>
    <property type="match status" value="1"/>
</dbReference>
<dbReference type="InterPro" id="IPR011701">
    <property type="entry name" value="MFS"/>
</dbReference>
<dbReference type="InterPro" id="IPR020846">
    <property type="entry name" value="MFS_dom"/>
</dbReference>
<dbReference type="InterPro" id="IPR052714">
    <property type="entry name" value="MFS_Exporter"/>
</dbReference>
<dbReference type="InterPro" id="IPR036259">
    <property type="entry name" value="MFS_trans_sf"/>
</dbReference>
<dbReference type="NCBIfam" id="NF047574">
    <property type="entry name" value="opine_export_Sa"/>
    <property type="match status" value="1"/>
</dbReference>
<dbReference type="PANTHER" id="PTHR23531:SF2">
    <property type="entry name" value="PERMEASE"/>
    <property type="match status" value="1"/>
</dbReference>
<dbReference type="PANTHER" id="PTHR23531">
    <property type="entry name" value="QUINOLENE RESISTANCE PROTEIN NORA"/>
    <property type="match status" value="1"/>
</dbReference>
<dbReference type="Pfam" id="PF07690">
    <property type="entry name" value="MFS_1"/>
    <property type="match status" value="1"/>
</dbReference>
<dbReference type="SUPFAM" id="SSF103473">
    <property type="entry name" value="MFS general substrate transporter"/>
    <property type="match status" value="1"/>
</dbReference>
<dbReference type="PROSITE" id="PS50850">
    <property type="entry name" value="MFS"/>
    <property type="match status" value="1"/>
</dbReference>